<reference key="1">
    <citation type="journal article" date="2011" name="Stand. Genomic Sci.">
        <title>Complete genome sequence of Tsukamurella paurometabola type strain (no. 33).</title>
        <authorList>
            <person name="Munk A.C."/>
            <person name="Lapidus A."/>
            <person name="Lucas S."/>
            <person name="Nolan M."/>
            <person name="Tice H."/>
            <person name="Cheng J.F."/>
            <person name="Del Rio T.G."/>
            <person name="Goodwin L."/>
            <person name="Pitluck S."/>
            <person name="Liolios K."/>
            <person name="Huntemann M."/>
            <person name="Ivanova N."/>
            <person name="Mavromatis K."/>
            <person name="Mikhailova N."/>
            <person name="Pati A."/>
            <person name="Chen A."/>
            <person name="Palaniappan K."/>
            <person name="Tapia R."/>
            <person name="Han C."/>
            <person name="Land M."/>
            <person name="Hauser L."/>
            <person name="Chang Y.J."/>
            <person name="Jeffries C.D."/>
            <person name="Brettin T."/>
            <person name="Yasawong M."/>
            <person name="Brambilla E.M."/>
            <person name="Rohde M."/>
            <person name="Sikorski J."/>
            <person name="Goeker M."/>
            <person name="Detter J.C."/>
            <person name="Woyke T."/>
            <person name="Bristow J."/>
            <person name="Eisen J.A."/>
            <person name="Markowitz V."/>
            <person name="Hugenholtz P."/>
            <person name="Kyrpides N.C."/>
            <person name="Klenk H.P."/>
        </authorList>
    </citation>
    <scope>NUCLEOTIDE SEQUENCE [LARGE SCALE GENOMIC DNA]</scope>
    <source>
        <strain>ATCC 8368 / DSM 20162 / CCUG 35730 / CIP 100753 / JCM 10117 / KCTC 9821 / NBRC 16120 / NCIMB 702349 / NCTC 13040</strain>
    </source>
</reference>
<evidence type="ECO:0000255" key="1">
    <source>
        <dbReference type="HAMAP-Rule" id="MF_01696"/>
    </source>
</evidence>
<organism>
    <name type="scientific">Tsukamurella paurometabola (strain ATCC 8368 / DSM 20162 / CCUG 35730 / CIP 100753 / JCM 10117 / KCTC 9821 / NBRC 16120 / NCIMB 702349 / NCTC 13040)</name>
    <name type="common">Corynebacterium paurometabolum</name>
    <dbReference type="NCBI Taxonomy" id="521096"/>
    <lineage>
        <taxon>Bacteria</taxon>
        <taxon>Bacillati</taxon>
        <taxon>Actinomycetota</taxon>
        <taxon>Actinomycetes</taxon>
        <taxon>Mycobacteriales</taxon>
        <taxon>Tsukamurellaceae</taxon>
        <taxon>Tsukamurella</taxon>
    </lineage>
</organism>
<comment type="function">
    <text evidence="1">Catalyzes the deacetylation of 1D-myo-inositol 2-acetamido-2-deoxy-alpha-D-glucopyranoside (GlcNAc-Ins) in the mycothiol biosynthesis pathway.</text>
</comment>
<comment type="catalytic activity">
    <reaction evidence="1">
        <text>1D-myo-inositol 2-acetamido-2-deoxy-alpha-D-glucopyranoside + H2O = 1D-myo-inositol 2-amino-2-deoxy-alpha-D-glucopyranoside + acetate</text>
        <dbReference type="Rhea" id="RHEA:26180"/>
        <dbReference type="ChEBI" id="CHEBI:15377"/>
        <dbReference type="ChEBI" id="CHEBI:30089"/>
        <dbReference type="ChEBI" id="CHEBI:52442"/>
        <dbReference type="ChEBI" id="CHEBI:58886"/>
        <dbReference type="EC" id="3.5.1.103"/>
    </reaction>
</comment>
<comment type="cofactor">
    <cofactor evidence="1">
        <name>Zn(2+)</name>
        <dbReference type="ChEBI" id="CHEBI:29105"/>
    </cofactor>
    <text evidence="1">Binds 1 zinc ion per subunit.</text>
</comment>
<comment type="similarity">
    <text evidence="1">Belongs to the MshB deacetylase family.</text>
</comment>
<gene>
    <name evidence="1" type="primary">mshB</name>
    <name type="ordered locus">Tpau_1146</name>
</gene>
<sequence>MTRRLLLVHAHPDDETITTGGTIARYLSEGAEVTVVTCTLGEEGEVMDPPYAQLVADQADQLGGYRIAELTRALAALSEPAGPVLRPRFLGGAGRWRDSGMAGTPAADHPRAFASADRIAADGPVALLAGIIRELRPQVVVTYDQVGGYGHPDHIAAHTVTTAAVDAAAASGLPGEQWAVAKLYWTVAGRGQIDRGVAAFAETELPGDWSVPESASLPAHDDAALTALIDTRDVAGRKVAALRAHATQLAVAPCGTAFALTNLIAQPVLTEEAYILVRGTAAPGPDGLERDLFAGLE</sequence>
<dbReference type="EC" id="3.5.1.103" evidence="1"/>
<dbReference type="EMBL" id="CP001966">
    <property type="protein sequence ID" value="ADG77777.1"/>
    <property type="molecule type" value="Genomic_DNA"/>
</dbReference>
<dbReference type="RefSeq" id="WP_013125815.1">
    <property type="nucleotide sequence ID" value="NC_014158.1"/>
</dbReference>
<dbReference type="SMR" id="D5UVX0"/>
<dbReference type="STRING" id="521096.Tpau_1146"/>
<dbReference type="KEGG" id="tpr:Tpau_1146"/>
<dbReference type="eggNOG" id="COG2120">
    <property type="taxonomic scope" value="Bacteria"/>
</dbReference>
<dbReference type="HOGENOM" id="CLU_049311_2_1_11"/>
<dbReference type="Proteomes" id="UP000001213">
    <property type="component" value="Chromosome"/>
</dbReference>
<dbReference type="GO" id="GO:0035595">
    <property type="term" value="F:N-acetylglucosaminylinositol deacetylase activity"/>
    <property type="evidence" value="ECO:0007669"/>
    <property type="project" value="UniProtKB-EC"/>
</dbReference>
<dbReference type="GO" id="GO:0008270">
    <property type="term" value="F:zinc ion binding"/>
    <property type="evidence" value="ECO:0007669"/>
    <property type="project" value="UniProtKB-UniRule"/>
</dbReference>
<dbReference type="GO" id="GO:0010125">
    <property type="term" value="P:mycothiol biosynthetic process"/>
    <property type="evidence" value="ECO:0007669"/>
    <property type="project" value="UniProtKB-UniRule"/>
</dbReference>
<dbReference type="Gene3D" id="3.40.50.10320">
    <property type="entry name" value="LmbE-like"/>
    <property type="match status" value="1"/>
</dbReference>
<dbReference type="HAMAP" id="MF_01696">
    <property type="entry name" value="MshB"/>
    <property type="match status" value="1"/>
</dbReference>
<dbReference type="InterPro" id="IPR003737">
    <property type="entry name" value="GlcNAc_PI_deacetylase-related"/>
</dbReference>
<dbReference type="InterPro" id="IPR024078">
    <property type="entry name" value="LmbE-like_dom_sf"/>
</dbReference>
<dbReference type="InterPro" id="IPR017810">
    <property type="entry name" value="Mycothiol_biosynthesis_MshB"/>
</dbReference>
<dbReference type="NCBIfam" id="TIGR03445">
    <property type="entry name" value="mycothiol_MshB"/>
    <property type="match status" value="1"/>
</dbReference>
<dbReference type="PANTHER" id="PTHR12993:SF26">
    <property type="entry name" value="1D-MYO-INOSITOL 2-ACETAMIDO-2-DEOXY-ALPHA-D-GLUCOPYRANOSIDE DEACETYLASE"/>
    <property type="match status" value="1"/>
</dbReference>
<dbReference type="PANTHER" id="PTHR12993">
    <property type="entry name" value="N-ACETYLGLUCOSAMINYL-PHOSPHATIDYLINOSITOL DE-N-ACETYLASE-RELATED"/>
    <property type="match status" value="1"/>
</dbReference>
<dbReference type="Pfam" id="PF02585">
    <property type="entry name" value="PIG-L"/>
    <property type="match status" value="1"/>
</dbReference>
<dbReference type="SUPFAM" id="SSF102588">
    <property type="entry name" value="LmbE-like"/>
    <property type="match status" value="1"/>
</dbReference>
<name>MSHB_TSUPD</name>
<protein>
    <recommendedName>
        <fullName evidence="1">1D-myo-inositol 2-acetamido-2-deoxy-alpha-D-glucopyranoside deacetylase</fullName>
        <shortName evidence="1">GlcNAc-Ins deacetylase</shortName>
        <ecNumber evidence="1">3.5.1.103</ecNumber>
    </recommendedName>
    <alternativeName>
        <fullName>N-acetyl-1-D-myo-inositol 2-amino-2-deoxy-alpha-D-glucopyranoside deacetylase</fullName>
    </alternativeName>
</protein>
<accession>D5UVX0</accession>
<proteinExistence type="inferred from homology"/>
<feature type="chain" id="PRO_0000400233" description="1D-myo-inositol 2-acetamido-2-deoxy-alpha-D-glucopyranoside deacetylase">
    <location>
        <begin position="1"/>
        <end position="297"/>
    </location>
</feature>
<feature type="binding site" evidence="1">
    <location>
        <position position="11"/>
    </location>
    <ligand>
        <name>Zn(2+)</name>
        <dbReference type="ChEBI" id="CHEBI:29105"/>
    </ligand>
</feature>
<feature type="binding site" evidence="1">
    <location>
        <position position="14"/>
    </location>
    <ligand>
        <name>Zn(2+)</name>
        <dbReference type="ChEBI" id="CHEBI:29105"/>
    </ligand>
</feature>
<feature type="binding site" evidence="1">
    <location>
        <position position="154"/>
    </location>
    <ligand>
        <name>Zn(2+)</name>
        <dbReference type="ChEBI" id="CHEBI:29105"/>
    </ligand>
</feature>
<keyword id="KW-0378">Hydrolase</keyword>
<keyword id="KW-0479">Metal-binding</keyword>
<keyword id="KW-1185">Reference proteome</keyword>
<keyword id="KW-0862">Zinc</keyword>